<comment type="function">
    <text evidence="1">One of several proteins that assist in the late maturation steps of the functional core of the 30S ribosomal subunit. Helps release RbfA from mature subunits. May play a role in the assembly of ribosomal proteins into the subunit. Circularly permuted GTPase that catalyzes slow GTP hydrolysis, GTPase activity is stimulated by the 30S ribosomal subunit.</text>
</comment>
<comment type="cofactor">
    <cofactor evidence="1">
        <name>Zn(2+)</name>
        <dbReference type="ChEBI" id="CHEBI:29105"/>
    </cofactor>
    <text evidence="1">Binds 1 zinc ion per subunit.</text>
</comment>
<comment type="subunit">
    <text evidence="1">Monomer. Associates with 30S ribosomal subunit, binds 16S rRNA.</text>
</comment>
<comment type="subcellular location">
    <subcellularLocation>
        <location evidence="1">Cytoplasm</location>
    </subcellularLocation>
</comment>
<comment type="similarity">
    <text evidence="1">Belongs to the TRAFAC class YlqF/YawG GTPase family. RsgA subfamily.</text>
</comment>
<reference key="1">
    <citation type="journal article" date="2000" name="Science">
        <title>Complete genome sequence of Neisseria meningitidis serogroup B strain MC58.</title>
        <authorList>
            <person name="Tettelin H."/>
            <person name="Saunders N.J."/>
            <person name="Heidelberg J.F."/>
            <person name="Jeffries A.C."/>
            <person name="Nelson K.E."/>
            <person name="Eisen J.A."/>
            <person name="Ketchum K.A."/>
            <person name="Hood D.W."/>
            <person name="Peden J.F."/>
            <person name="Dodson R.J."/>
            <person name="Nelson W.C."/>
            <person name="Gwinn M.L."/>
            <person name="DeBoy R.T."/>
            <person name="Peterson J.D."/>
            <person name="Hickey E.K."/>
            <person name="Haft D.H."/>
            <person name="Salzberg S.L."/>
            <person name="White O."/>
            <person name="Fleischmann R.D."/>
            <person name="Dougherty B.A."/>
            <person name="Mason T.M."/>
            <person name="Ciecko A."/>
            <person name="Parksey D.S."/>
            <person name="Blair E."/>
            <person name="Cittone H."/>
            <person name="Clark E.B."/>
            <person name="Cotton M.D."/>
            <person name="Utterback T.R."/>
            <person name="Khouri H.M."/>
            <person name="Qin H."/>
            <person name="Vamathevan J.J."/>
            <person name="Gill J."/>
            <person name="Scarlato V."/>
            <person name="Masignani V."/>
            <person name="Pizza M."/>
            <person name="Grandi G."/>
            <person name="Sun L."/>
            <person name="Smith H.O."/>
            <person name="Fraser C.M."/>
            <person name="Moxon E.R."/>
            <person name="Rappuoli R."/>
            <person name="Venter J.C."/>
        </authorList>
    </citation>
    <scope>NUCLEOTIDE SEQUENCE [LARGE SCALE GENOMIC DNA]</scope>
    <source>
        <strain>ATCC BAA-335 / MC58</strain>
    </source>
</reference>
<protein>
    <recommendedName>
        <fullName evidence="1">Small ribosomal subunit biogenesis GTPase RsgA</fullName>
        <ecNumber evidence="1">3.6.1.-</ecNumber>
    </recommendedName>
</protein>
<accession>Q9K1A4</accession>
<organism>
    <name type="scientific">Neisseria meningitidis serogroup B (strain ATCC BAA-335 / MC58)</name>
    <dbReference type="NCBI Taxonomy" id="122586"/>
    <lineage>
        <taxon>Bacteria</taxon>
        <taxon>Pseudomonadati</taxon>
        <taxon>Pseudomonadota</taxon>
        <taxon>Betaproteobacteria</taxon>
        <taxon>Neisseriales</taxon>
        <taxon>Neisseriaceae</taxon>
        <taxon>Neisseria</taxon>
    </lineage>
</organism>
<keyword id="KW-0963">Cytoplasm</keyword>
<keyword id="KW-0342">GTP-binding</keyword>
<keyword id="KW-0378">Hydrolase</keyword>
<keyword id="KW-0479">Metal-binding</keyword>
<keyword id="KW-0547">Nucleotide-binding</keyword>
<keyword id="KW-1185">Reference proteome</keyword>
<keyword id="KW-0690">Ribosome biogenesis</keyword>
<keyword id="KW-0694">RNA-binding</keyword>
<keyword id="KW-0699">rRNA-binding</keyword>
<keyword id="KW-0862">Zinc</keyword>
<proteinExistence type="inferred from homology"/>
<name>RSGA_NEIMB</name>
<sequence>MPSEHPFSDGIPTPNPKETMNDTAQITASYGRRYIVRTPDGTTYEASTRKKRVDFACGDRVRISPVNAEQVVIEDFLPRQSLLYRQDAWKTKLIAANVTQLLIVTAAVPSPSVRLLQRALLAAEAAGIEAVIVLNKADLPETALWREKLKFYETLGYPVIETRALENAGSLRPALQGHSNILLGQSGMGKSTLTNALLGSQTARTGDISAALDSGKHTTTHARLYDLNGETQLIDSPGLQEFGLHHLQAADLPRYFPDFRHLVGQCRFHNCTHRAEPGCAFKAAAQTGAASPERLAFLQGITDELPG</sequence>
<gene>
    <name evidence="1" type="primary">rsgA</name>
    <name type="ordered locus">NMB0263</name>
</gene>
<evidence type="ECO:0000255" key="1">
    <source>
        <dbReference type="HAMAP-Rule" id="MF_01820"/>
    </source>
</evidence>
<evidence type="ECO:0000255" key="2">
    <source>
        <dbReference type="PROSITE-ProRule" id="PRU01058"/>
    </source>
</evidence>
<evidence type="ECO:0000256" key="3">
    <source>
        <dbReference type="SAM" id="MobiDB-lite"/>
    </source>
</evidence>
<feature type="chain" id="PRO_0000171499" description="Small ribosomal subunit biogenesis GTPase RsgA">
    <location>
        <begin position="1"/>
        <end position="307"/>
    </location>
</feature>
<feature type="domain" description="CP-type G" evidence="2">
    <location>
        <begin position="85"/>
        <end position="242"/>
    </location>
</feature>
<feature type="region of interest" description="Disordered" evidence="3">
    <location>
        <begin position="1"/>
        <end position="21"/>
    </location>
</feature>
<feature type="binding site" evidence="1">
    <location>
        <begin position="135"/>
        <end position="138"/>
    </location>
    <ligand>
        <name>GTP</name>
        <dbReference type="ChEBI" id="CHEBI:37565"/>
    </ligand>
</feature>
<feature type="binding site" evidence="1">
    <location>
        <begin position="184"/>
        <end position="192"/>
    </location>
    <ligand>
        <name>GTP</name>
        <dbReference type="ChEBI" id="CHEBI:37565"/>
    </ligand>
</feature>
<feature type="binding site" evidence="1">
    <location>
        <position position="266"/>
    </location>
    <ligand>
        <name>Zn(2+)</name>
        <dbReference type="ChEBI" id="CHEBI:29105"/>
    </ligand>
</feature>
<feature type="binding site" evidence="1">
    <location>
        <position position="271"/>
    </location>
    <ligand>
        <name>Zn(2+)</name>
        <dbReference type="ChEBI" id="CHEBI:29105"/>
    </ligand>
</feature>
<feature type="binding site" evidence="1">
    <location>
        <position position="273"/>
    </location>
    <ligand>
        <name>Zn(2+)</name>
        <dbReference type="ChEBI" id="CHEBI:29105"/>
    </ligand>
</feature>
<feature type="binding site" evidence="1">
    <location>
        <position position="279"/>
    </location>
    <ligand>
        <name>Zn(2+)</name>
        <dbReference type="ChEBI" id="CHEBI:29105"/>
    </ligand>
</feature>
<dbReference type="EC" id="3.6.1.-" evidence="1"/>
<dbReference type="EMBL" id="AE002098">
    <property type="protein sequence ID" value="AAF40717.1"/>
    <property type="molecule type" value="Genomic_DNA"/>
</dbReference>
<dbReference type="PIR" id="H81217">
    <property type="entry name" value="H81217"/>
</dbReference>
<dbReference type="RefSeq" id="NP_273319.1">
    <property type="nucleotide sequence ID" value="NC_003112.2"/>
</dbReference>
<dbReference type="RefSeq" id="WP_002221919.1">
    <property type="nucleotide sequence ID" value="NC_003112.2"/>
</dbReference>
<dbReference type="SMR" id="Q9K1A4"/>
<dbReference type="FunCoup" id="Q9K1A4">
    <property type="interactions" value="359"/>
</dbReference>
<dbReference type="STRING" id="122586.NMB0263"/>
<dbReference type="PaxDb" id="122586-NMB0263"/>
<dbReference type="KEGG" id="nme:NMB0263"/>
<dbReference type="PATRIC" id="fig|122586.8.peg.327"/>
<dbReference type="HOGENOM" id="CLU_033617_2_0_4"/>
<dbReference type="InParanoid" id="Q9K1A4"/>
<dbReference type="OrthoDB" id="9809485at2"/>
<dbReference type="Proteomes" id="UP000000425">
    <property type="component" value="Chromosome"/>
</dbReference>
<dbReference type="GO" id="GO:0005737">
    <property type="term" value="C:cytoplasm"/>
    <property type="evidence" value="ECO:0007669"/>
    <property type="project" value="UniProtKB-SubCell"/>
</dbReference>
<dbReference type="GO" id="GO:0005525">
    <property type="term" value="F:GTP binding"/>
    <property type="evidence" value="ECO:0007669"/>
    <property type="project" value="UniProtKB-UniRule"/>
</dbReference>
<dbReference type="GO" id="GO:0003924">
    <property type="term" value="F:GTPase activity"/>
    <property type="evidence" value="ECO:0007669"/>
    <property type="project" value="UniProtKB-UniRule"/>
</dbReference>
<dbReference type="GO" id="GO:0046872">
    <property type="term" value="F:metal ion binding"/>
    <property type="evidence" value="ECO:0007669"/>
    <property type="project" value="UniProtKB-KW"/>
</dbReference>
<dbReference type="GO" id="GO:0019843">
    <property type="term" value="F:rRNA binding"/>
    <property type="evidence" value="ECO:0007669"/>
    <property type="project" value="UniProtKB-KW"/>
</dbReference>
<dbReference type="GO" id="GO:0042274">
    <property type="term" value="P:ribosomal small subunit biogenesis"/>
    <property type="evidence" value="ECO:0007669"/>
    <property type="project" value="UniProtKB-UniRule"/>
</dbReference>
<dbReference type="CDD" id="cd01854">
    <property type="entry name" value="YjeQ_EngC"/>
    <property type="match status" value="1"/>
</dbReference>
<dbReference type="Gene3D" id="3.40.50.300">
    <property type="entry name" value="P-loop containing nucleotide triphosphate hydrolases"/>
    <property type="match status" value="1"/>
</dbReference>
<dbReference type="Gene3D" id="1.10.40.50">
    <property type="entry name" value="Probable gtpase engc, domain 3"/>
    <property type="match status" value="1"/>
</dbReference>
<dbReference type="HAMAP" id="MF_01820">
    <property type="entry name" value="GTPase_RsgA"/>
    <property type="match status" value="1"/>
</dbReference>
<dbReference type="InterPro" id="IPR030378">
    <property type="entry name" value="G_CP_dom"/>
</dbReference>
<dbReference type="InterPro" id="IPR027417">
    <property type="entry name" value="P-loop_NTPase"/>
</dbReference>
<dbReference type="InterPro" id="IPR004881">
    <property type="entry name" value="Ribosome_biogen_GTPase_RsgA"/>
</dbReference>
<dbReference type="InterPro" id="IPR010914">
    <property type="entry name" value="RsgA_GTPase_dom"/>
</dbReference>
<dbReference type="NCBIfam" id="TIGR00157">
    <property type="entry name" value="ribosome small subunit-dependent GTPase A"/>
    <property type="match status" value="1"/>
</dbReference>
<dbReference type="PANTHER" id="PTHR32120">
    <property type="entry name" value="SMALL RIBOSOMAL SUBUNIT BIOGENESIS GTPASE RSGA"/>
    <property type="match status" value="1"/>
</dbReference>
<dbReference type="PANTHER" id="PTHR32120:SF11">
    <property type="entry name" value="SMALL RIBOSOMAL SUBUNIT BIOGENESIS GTPASE RSGA 1, MITOCHONDRIAL-RELATED"/>
    <property type="match status" value="1"/>
</dbReference>
<dbReference type="Pfam" id="PF03193">
    <property type="entry name" value="RsgA_GTPase"/>
    <property type="match status" value="1"/>
</dbReference>
<dbReference type="SUPFAM" id="SSF52540">
    <property type="entry name" value="P-loop containing nucleoside triphosphate hydrolases"/>
    <property type="match status" value="1"/>
</dbReference>
<dbReference type="PROSITE" id="PS50936">
    <property type="entry name" value="ENGC_GTPASE"/>
    <property type="match status" value="1"/>
</dbReference>
<dbReference type="PROSITE" id="PS51721">
    <property type="entry name" value="G_CP"/>
    <property type="match status" value="1"/>
</dbReference>